<proteinExistence type="inferred from homology"/>
<name>FLUC_SYNY3</name>
<comment type="function">
    <text evidence="1">Fluoride-specific ion channel. Important for reducing fluoride concentration in the cell, thus reducing its toxicity.</text>
</comment>
<comment type="catalytic activity">
    <reaction evidence="1">
        <text>fluoride(in) = fluoride(out)</text>
        <dbReference type="Rhea" id="RHEA:76159"/>
        <dbReference type="ChEBI" id="CHEBI:17051"/>
    </reaction>
    <physiologicalReaction direction="left-to-right" evidence="1">
        <dbReference type="Rhea" id="RHEA:76160"/>
    </physiologicalReaction>
</comment>
<comment type="activity regulation">
    <text evidence="1">Na(+) is not transported, but it plays an essential structural role and its presence is essential for fluoride channel function.</text>
</comment>
<comment type="subcellular location">
    <subcellularLocation>
        <location evidence="1">Cell inner membrane</location>
        <topology evidence="1">Multi-pass membrane protein</topology>
    </subcellularLocation>
</comment>
<comment type="similarity">
    <text evidence="1">Belongs to the fluoride channel Fluc/FEX (TC 1.A.43) family.</text>
</comment>
<comment type="sequence caution" evidence="2">
    <conflict type="erroneous initiation">
        <sequence resource="EMBL-CDS" id="BAA16851"/>
    </conflict>
</comment>
<protein>
    <recommendedName>
        <fullName evidence="1">Fluoride-specific ion channel FluC</fullName>
    </recommendedName>
</protein>
<gene>
    <name evidence="1" type="primary">fluC</name>
    <name evidence="1" type="synonym">crcB</name>
    <name type="ordered locus">sll1192</name>
</gene>
<accession>P72836</accession>
<organism>
    <name type="scientific">Synechocystis sp. (strain ATCC 27184 / PCC 6803 / Kazusa)</name>
    <dbReference type="NCBI Taxonomy" id="1111708"/>
    <lineage>
        <taxon>Bacteria</taxon>
        <taxon>Bacillati</taxon>
        <taxon>Cyanobacteriota</taxon>
        <taxon>Cyanophyceae</taxon>
        <taxon>Synechococcales</taxon>
        <taxon>Merismopediaceae</taxon>
        <taxon>Synechocystis</taxon>
    </lineage>
</organism>
<dbReference type="EMBL" id="BA000022">
    <property type="protein sequence ID" value="BAA16851.1"/>
    <property type="status" value="ALT_INIT"/>
    <property type="molecule type" value="Genomic_DNA"/>
</dbReference>
<dbReference type="PIR" id="S74700">
    <property type="entry name" value="S74700"/>
</dbReference>
<dbReference type="SMR" id="P72836"/>
<dbReference type="FunCoup" id="P72836">
    <property type="interactions" value="209"/>
</dbReference>
<dbReference type="STRING" id="1148.gene:10497709"/>
<dbReference type="PaxDb" id="1148-1651925"/>
<dbReference type="EnsemblBacteria" id="BAA16851">
    <property type="protein sequence ID" value="BAA16851"/>
    <property type="gene ID" value="BAA16851"/>
</dbReference>
<dbReference type="KEGG" id="syn:sll1192"/>
<dbReference type="eggNOG" id="COG0239">
    <property type="taxonomic scope" value="Bacteria"/>
</dbReference>
<dbReference type="InParanoid" id="P72836"/>
<dbReference type="PhylomeDB" id="P72836"/>
<dbReference type="Proteomes" id="UP000001425">
    <property type="component" value="Chromosome"/>
</dbReference>
<dbReference type="GO" id="GO:0005886">
    <property type="term" value="C:plasma membrane"/>
    <property type="evidence" value="ECO:0000318"/>
    <property type="project" value="GO_Central"/>
</dbReference>
<dbReference type="GO" id="GO:0062054">
    <property type="term" value="F:fluoride channel activity"/>
    <property type="evidence" value="ECO:0007669"/>
    <property type="project" value="UniProtKB-UniRule"/>
</dbReference>
<dbReference type="GO" id="GO:1903425">
    <property type="term" value="F:fluoride transmembrane transporter activity"/>
    <property type="evidence" value="ECO:0000318"/>
    <property type="project" value="GO_Central"/>
</dbReference>
<dbReference type="GO" id="GO:0046872">
    <property type="term" value="F:metal ion binding"/>
    <property type="evidence" value="ECO:0007669"/>
    <property type="project" value="UniProtKB-KW"/>
</dbReference>
<dbReference type="GO" id="GO:0140114">
    <property type="term" value="P:cellular detoxification of fluoride"/>
    <property type="evidence" value="ECO:0007669"/>
    <property type="project" value="UniProtKB-UniRule"/>
</dbReference>
<dbReference type="GO" id="GO:1903424">
    <property type="term" value="P:fluoride transmembrane transport"/>
    <property type="evidence" value="ECO:0000318"/>
    <property type="project" value="GO_Central"/>
</dbReference>
<dbReference type="HAMAP" id="MF_00454">
    <property type="entry name" value="FluC"/>
    <property type="match status" value="1"/>
</dbReference>
<dbReference type="InterPro" id="IPR003691">
    <property type="entry name" value="FluC"/>
</dbReference>
<dbReference type="NCBIfam" id="TIGR00494">
    <property type="entry name" value="crcB"/>
    <property type="match status" value="1"/>
</dbReference>
<dbReference type="PANTHER" id="PTHR28259">
    <property type="entry name" value="FLUORIDE EXPORT PROTEIN 1-RELATED"/>
    <property type="match status" value="1"/>
</dbReference>
<dbReference type="PANTHER" id="PTHR28259:SF1">
    <property type="entry name" value="FLUORIDE EXPORT PROTEIN 1-RELATED"/>
    <property type="match status" value="1"/>
</dbReference>
<dbReference type="Pfam" id="PF02537">
    <property type="entry name" value="CRCB"/>
    <property type="match status" value="1"/>
</dbReference>
<evidence type="ECO:0000255" key="1">
    <source>
        <dbReference type="HAMAP-Rule" id="MF_00454"/>
    </source>
</evidence>
<evidence type="ECO:0000305" key="2"/>
<keyword id="KW-0997">Cell inner membrane</keyword>
<keyword id="KW-1003">Cell membrane</keyword>
<keyword id="KW-0407">Ion channel</keyword>
<keyword id="KW-0406">Ion transport</keyword>
<keyword id="KW-0472">Membrane</keyword>
<keyword id="KW-0479">Metal-binding</keyword>
<keyword id="KW-1185">Reference proteome</keyword>
<keyword id="KW-0915">Sodium</keyword>
<keyword id="KW-0812">Transmembrane</keyword>
<keyword id="KW-1133">Transmembrane helix</keyword>
<keyword id="KW-0813">Transport</keyword>
<feature type="chain" id="PRO_0000110202" description="Fluoride-specific ion channel FluC">
    <location>
        <begin position="1"/>
        <end position="130"/>
    </location>
</feature>
<feature type="transmembrane region" description="Helical" evidence="1">
    <location>
        <begin position="9"/>
        <end position="29"/>
    </location>
</feature>
<feature type="transmembrane region" description="Helical" evidence="1">
    <location>
        <begin position="39"/>
        <end position="59"/>
    </location>
</feature>
<feature type="transmembrane region" description="Helical" evidence="1">
    <location>
        <begin position="71"/>
        <end position="91"/>
    </location>
</feature>
<feature type="transmembrane region" description="Helical" evidence="1">
    <location>
        <begin position="104"/>
        <end position="124"/>
    </location>
</feature>
<feature type="binding site" evidence="1">
    <location>
        <position position="79"/>
    </location>
    <ligand>
        <name>Na(+)</name>
        <dbReference type="ChEBI" id="CHEBI:29101"/>
        <note>structural</note>
    </ligand>
</feature>
<feature type="binding site" evidence="1">
    <location>
        <position position="82"/>
    </location>
    <ligand>
        <name>Na(+)</name>
        <dbReference type="ChEBI" id="CHEBI:29101"/>
        <note>structural</note>
    </ligand>
</feature>
<reference key="1">
    <citation type="journal article" date="1996" name="DNA Res.">
        <title>Sequence analysis of the genome of the unicellular cyanobacterium Synechocystis sp. strain PCC6803. II. Sequence determination of the entire genome and assignment of potential protein-coding regions.</title>
        <authorList>
            <person name="Kaneko T."/>
            <person name="Sato S."/>
            <person name="Kotani H."/>
            <person name="Tanaka A."/>
            <person name="Asamizu E."/>
            <person name="Nakamura Y."/>
            <person name="Miyajima N."/>
            <person name="Hirosawa M."/>
            <person name="Sugiura M."/>
            <person name="Sasamoto S."/>
            <person name="Kimura T."/>
            <person name="Hosouchi T."/>
            <person name="Matsuno A."/>
            <person name="Muraki A."/>
            <person name="Nakazaki N."/>
            <person name="Naruo K."/>
            <person name="Okumura S."/>
            <person name="Shimpo S."/>
            <person name="Takeuchi C."/>
            <person name="Wada T."/>
            <person name="Watanabe A."/>
            <person name="Yamada M."/>
            <person name="Yasuda M."/>
            <person name="Tabata S."/>
        </authorList>
    </citation>
    <scope>NUCLEOTIDE SEQUENCE [LARGE SCALE GENOMIC DNA]</scope>
    <source>
        <strain>ATCC 27184 / PCC 6803 / Kazusa</strain>
    </source>
</reference>
<sequence length="130" mass="13586">MPASLRSPLAIILGAIPGALARYYATIFLAGLFGNDLPYATFLINFSGCVGMGLVVTLATQPALMSPDLRLLLAVGFLGSYTTFSTYALEVTSLWRMGQLGQGVLYGLGSLGIGTIGVLLGSLIARRLTI</sequence>